<reference key="1">
    <citation type="journal article" date="1994" name="Mol. Biochem. Parasitol.">
        <title>A gene family encoding heterogeneous histone H1 proteins in Trypanosoma cruzi.</title>
        <authorList>
            <person name="Aaslund L."/>
            <person name="Carlsson L."/>
            <person name="Henriksson J."/>
            <person name="Rydaaker M."/>
            <person name="Toro G.C."/>
            <person name="Galanti N."/>
            <person name="Pettersson U."/>
        </authorList>
    </citation>
    <scope>NUCLEOTIDE SEQUENCE [MRNA]</scope>
    <source>
        <strain>Tulahuen 2</strain>
    </source>
</reference>
<dbReference type="EMBL" id="L27115">
    <property type="protein sequence ID" value="AAA66478.1"/>
    <property type="molecule type" value="mRNA"/>
</dbReference>
<dbReference type="GO" id="GO:0000786">
    <property type="term" value="C:nucleosome"/>
    <property type="evidence" value="ECO:0007669"/>
    <property type="project" value="InterPro"/>
</dbReference>
<dbReference type="GO" id="GO:0005634">
    <property type="term" value="C:nucleus"/>
    <property type="evidence" value="ECO:0007669"/>
    <property type="project" value="UniProtKB-SubCell"/>
</dbReference>
<dbReference type="GO" id="GO:0003677">
    <property type="term" value="F:DNA binding"/>
    <property type="evidence" value="ECO:0007669"/>
    <property type="project" value="UniProtKB-KW"/>
</dbReference>
<dbReference type="GO" id="GO:0030527">
    <property type="term" value="F:structural constituent of chromatin"/>
    <property type="evidence" value="ECO:0007669"/>
    <property type="project" value="InterPro"/>
</dbReference>
<dbReference type="GO" id="GO:0006334">
    <property type="term" value="P:nucleosome assembly"/>
    <property type="evidence" value="ECO:0007669"/>
    <property type="project" value="InterPro"/>
</dbReference>
<dbReference type="InterPro" id="IPR005819">
    <property type="entry name" value="H1/H5"/>
</dbReference>
<dbReference type="PRINTS" id="PR00624">
    <property type="entry name" value="HISTONEH5"/>
</dbReference>
<sequence length="97" mass="10290">MFCVLKFLSCTLSRINIVQKLSDAAVPPKKAAPKKAVAKKTPAKKTAKKPAVKKPAAKKRAAPKKKPAAAKKAVTKSAKKHAAKKAPKKAVKKAPKK</sequence>
<proteinExistence type="inferred from homology"/>
<comment type="subcellular location">
    <subcellularLocation>
        <location evidence="1">Nucleus</location>
    </subcellularLocation>
    <subcellularLocation>
        <location evidence="1">Chromosome</location>
    </subcellularLocation>
</comment>
<protein>
    <recommendedName>
        <fullName>Histone H1.C2</fullName>
    </recommendedName>
</protein>
<keyword id="KW-0158">Chromosome</keyword>
<keyword id="KW-0238">DNA-binding</keyword>
<keyword id="KW-0539">Nucleus</keyword>
<name>H1C2_TRYCR</name>
<accession>P40268</accession>
<evidence type="ECO:0000250" key="1"/>
<evidence type="ECO:0000256" key="2">
    <source>
        <dbReference type="SAM" id="MobiDB-lite"/>
    </source>
</evidence>
<organism>
    <name type="scientific">Trypanosoma cruzi</name>
    <dbReference type="NCBI Taxonomy" id="5693"/>
    <lineage>
        <taxon>Eukaryota</taxon>
        <taxon>Discoba</taxon>
        <taxon>Euglenozoa</taxon>
        <taxon>Kinetoplastea</taxon>
        <taxon>Metakinetoplastina</taxon>
        <taxon>Trypanosomatida</taxon>
        <taxon>Trypanosomatidae</taxon>
        <taxon>Trypanosoma</taxon>
        <taxon>Schizotrypanum</taxon>
    </lineage>
</organism>
<feature type="chain" id="PRO_0000195991" description="Histone H1.C2">
    <location>
        <begin position="1"/>
        <end position="97"/>
    </location>
</feature>
<feature type="region of interest" description="Disordered" evidence="2">
    <location>
        <begin position="24"/>
        <end position="97"/>
    </location>
</feature>
<feature type="compositionally biased region" description="Basic residues" evidence="2">
    <location>
        <begin position="31"/>
        <end position="97"/>
    </location>
</feature>